<sequence>MFVRNTASVVRGTSRNYATLREIETRLKSIKNIEKITKTMKIVASTRLSKAERAKNSAKEYALADAAFYKNAETVPLEDAEKKDLIIAITSDKGLCGSIHSQLAKAVRLQLKQTPNADVVAIGDKVKGQLLRTNSDNLKFAFNGVGKEAPTFEETSLIANKILEGGASNYKKVSIFWNDPISSLSFEPSNKPVFNAAAIEQSPSFSKFEIDADNNVSQDLFEFTLSNEILAAMAEGYAAEVSARRNAMDNASKNAGDMINSYSILYNRTRQAVITNELVDIITGASSLD</sequence>
<organism>
    <name type="scientific">Kluyveromyces lactis (strain ATCC 8585 / CBS 2359 / DSM 70799 / NBRC 1267 / NRRL Y-1140 / WM37)</name>
    <name type="common">Yeast</name>
    <name type="synonym">Candida sphaerica</name>
    <dbReference type="NCBI Taxonomy" id="284590"/>
    <lineage>
        <taxon>Eukaryota</taxon>
        <taxon>Fungi</taxon>
        <taxon>Dikarya</taxon>
        <taxon>Ascomycota</taxon>
        <taxon>Saccharomycotina</taxon>
        <taxon>Saccharomycetes</taxon>
        <taxon>Saccharomycetales</taxon>
        <taxon>Saccharomycetaceae</taxon>
        <taxon>Kluyveromyces</taxon>
    </lineage>
</organism>
<evidence type="ECO:0000255" key="1"/>
<evidence type="ECO:0000269" key="2">
    <source>
    </source>
</evidence>
<evidence type="ECO:0000305" key="3"/>
<comment type="function">
    <text>Mitochondrial membrane ATP synthase (F(1)F(0) ATP synthase or Complex V) produces ATP from ADP in the presence of a proton gradient across the membrane which is generated by electron transport complexes of the respiratory chain. F-type ATPases consist of two structural domains, F(1) - containing the extramembraneous catalytic core, and F(0) - containing the membrane proton channel, linked together by a central stalk and a peripheral stalk. During catalysis, ATP synthesis in the catalytic domain of F(1) is coupled via a rotary mechanism of the central stalk subunits to proton translocation. Part of the complex F(1) domain and the central stalk which is part of the complex rotary element. The gamma subunit protrudes into the catalytic domain formed of alpha(3)beta(3). Rotation of the central stalk against the surrounding alpha(3)beta(3) subunits leads to hydrolysis of ATP in three separate catalytic sites on the beta subunits.</text>
</comment>
<comment type="subunit">
    <text>F-type ATPases have 2 components, CF(1) - the catalytic core - and CF(0) - the membrane proton channel. CF(1) has five subunits: alpha(3), beta(3), gamma(1), delta(1), epsilon(1). CF(0) has three main subunits: a, b and c.</text>
</comment>
<comment type="subcellular location">
    <subcellularLocation>
        <location>Mitochondrion</location>
    </subcellularLocation>
    <subcellularLocation>
        <location evidence="3">Mitochondrion inner membrane</location>
        <topology evidence="3">Peripheral membrane protein</topology>
    </subcellularLocation>
</comment>
<comment type="similarity">
    <text evidence="3">Belongs to the ATPase gamma chain family.</text>
</comment>
<reference key="1">
    <citation type="journal article" date="1995" name="EMBO J.">
        <title>Specific mutations in alpha- and gamma-subunits of F1-ATPase affect mitochondrial genome integrity in the petite-negative yeast Kluyveromyces lactis.</title>
        <authorList>
            <person name="Chen X.J."/>
            <person name="Clark-Walker G.D."/>
        </authorList>
    </citation>
    <scope>NUCLEOTIDE SEQUENCE [GENOMIC DNA]</scope>
    <scope>MUTAGENESIS OF THR-275</scope>
    <source>
        <strain>ATCC 76492 / CBS 2359/152 / CLIB 210</strain>
    </source>
</reference>
<reference key="2">
    <citation type="journal article" date="2004" name="Nature">
        <title>Genome evolution in yeasts.</title>
        <authorList>
            <person name="Dujon B."/>
            <person name="Sherman D."/>
            <person name="Fischer G."/>
            <person name="Durrens P."/>
            <person name="Casaregola S."/>
            <person name="Lafontaine I."/>
            <person name="de Montigny J."/>
            <person name="Marck C."/>
            <person name="Neuveglise C."/>
            <person name="Talla E."/>
            <person name="Goffard N."/>
            <person name="Frangeul L."/>
            <person name="Aigle M."/>
            <person name="Anthouard V."/>
            <person name="Babour A."/>
            <person name="Barbe V."/>
            <person name="Barnay S."/>
            <person name="Blanchin S."/>
            <person name="Beckerich J.-M."/>
            <person name="Beyne E."/>
            <person name="Bleykasten C."/>
            <person name="Boisrame A."/>
            <person name="Boyer J."/>
            <person name="Cattolico L."/>
            <person name="Confanioleri F."/>
            <person name="de Daruvar A."/>
            <person name="Despons L."/>
            <person name="Fabre E."/>
            <person name="Fairhead C."/>
            <person name="Ferry-Dumazet H."/>
            <person name="Groppi A."/>
            <person name="Hantraye F."/>
            <person name="Hennequin C."/>
            <person name="Jauniaux N."/>
            <person name="Joyet P."/>
            <person name="Kachouri R."/>
            <person name="Kerrest A."/>
            <person name="Koszul R."/>
            <person name="Lemaire M."/>
            <person name="Lesur I."/>
            <person name="Ma L."/>
            <person name="Muller H."/>
            <person name="Nicaud J.-M."/>
            <person name="Nikolski M."/>
            <person name="Oztas S."/>
            <person name="Ozier-Kalogeropoulos O."/>
            <person name="Pellenz S."/>
            <person name="Potier S."/>
            <person name="Richard G.-F."/>
            <person name="Straub M.-L."/>
            <person name="Suleau A."/>
            <person name="Swennen D."/>
            <person name="Tekaia F."/>
            <person name="Wesolowski-Louvel M."/>
            <person name="Westhof E."/>
            <person name="Wirth B."/>
            <person name="Zeniou-Meyer M."/>
            <person name="Zivanovic Y."/>
            <person name="Bolotin-Fukuhara M."/>
            <person name="Thierry A."/>
            <person name="Bouchier C."/>
            <person name="Caudron B."/>
            <person name="Scarpelli C."/>
            <person name="Gaillardin C."/>
            <person name="Weissenbach J."/>
            <person name="Wincker P."/>
            <person name="Souciet J.-L."/>
        </authorList>
    </citation>
    <scope>NUCLEOTIDE SEQUENCE [LARGE SCALE GENOMIC DNA]</scope>
    <source>
        <strain>ATCC 8585 / CBS 2359 / DSM 70799 / NBRC 1267 / NRRL Y-1140 / WM37</strain>
    </source>
</reference>
<gene>
    <name type="primary">ATP3</name>
    <name type="synonym">MGI5</name>
    <name type="ordered locus">KLLA0B06886g</name>
</gene>
<protein>
    <recommendedName>
        <fullName>ATP synthase subunit gamma, mitochondrial</fullName>
    </recommendedName>
    <alternativeName>
        <fullName>F-ATPase gamma subunit</fullName>
    </alternativeName>
</protein>
<keyword id="KW-0066">ATP synthesis</keyword>
<keyword id="KW-0139">CF(1)</keyword>
<keyword id="KW-0375">Hydrogen ion transport</keyword>
<keyword id="KW-0406">Ion transport</keyword>
<keyword id="KW-0472">Membrane</keyword>
<keyword id="KW-0496">Mitochondrion</keyword>
<keyword id="KW-0999">Mitochondrion inner membrane</keyword>
<keyword id="KW-1185">Reference proteome</keyword>
<keyword id="KW-0809">Transit peptide</keyword>
<keyword id="KW-0813">Transport</keyword>
<name>ATPG_KLULA</name>
<proteinExistence type="evidence at protein level"/>
<accession>P49377</accession>
<dbReference type="EMBL" id="X81711">
    <property type="protein sequence ID" value="CAA57355.1"/>
    <property type="molecule type" value="Genomic_DNA"/>
</dbReference>
<dbReference type="EMBL" id="CR382122">
    <property type="protein sequence ID" value="CAH02232.1"/>
    <property type="molecule type" value="Genomic_DNA"/>
</dbReference>
<dbReference type="PIR" id="S56153">
    <property type="entry name" value="S56153"/>
</dbReference>
<dbReference type="RefSeq" id="XP_451839.1">
    <property type="nucleotide sequence ID" value="XM_451839.1"/>
</dbReference>
<dbReference type="SMR" id="P49377"/>
<dbReference type="FunCoup" id="P49377">
    <property type="interactions" value="1008"/>
</dbReference>
<dbReference type="STRING" id="284590.P49377"/>
<dbReference type="PaxDb" id="284590-P49377"/>
<dbReference type="KEGG" id="kla:KLLA0_B06886g"/>
<dbReference type="eggNOG" id="KOG1531">
    <property type="taxonomic scope" value="Eukaryota"/>
</dbReference>
<dbReference type="HOGENOM" id="CLU_050669_4_1_1"/>
<dbReference type="InParanoid" id="P49377"/>
<dbReference type="OMA" id="MQITSAM"/>
<dbReference type="Proteomes" id="UP000000598">
    <property type="component" value="Chromosome B"/>
</dbReference>
<dbReference type="GO" id="GO:0005743">
    <property type="term" value="C:mitochondrial inner membrane"/>
    <property type="evidence" value="ECO:0007669"/>
    <property type="project" value="UniProtKB-SubCell"/>
</dbReference>
<dbReference type="GO" id="GO:0045259">
    <property type="term" value="C:proton-transporting ATP synthase complex"/>
    <property type="evidence" value="ECO:0007669"/>
    <property type="project" value="UniProtKB-KW"/>
</dbReference>
<dbReference type="GO" id="GO:0046933">
    <property type="term" value="F:proton-transporting ATP synthase activity, rotational mechanism"/>
    <property type="evidence" value="ECO:0007669"/>
    <property type="project" value="InterPro"/>
</dbReference>
<dbReference type="CDD" id="cd12151">
    <property type="entry name" value="F1-ATPase_gamma"/>
    <property type="match status" value="1"/>
</dbReference>
<dbReference type="FunFam" id="1.10.287.80:FF:000001">
    <property type="entry name" value="ATP synthase gamma chain"/>
    <property type="match status" value="1"/>
</dbReference>
<dbReference type="FunFam" id="3.40.1380.10:FF:000003">
    <property type="entry name" value="ATP synthase subunit gamma"/>
    <property type="match status" value="1"/>
</dbReference>
<dbReference type="Gene3D" id="3.40.1380.10">
    <property type="match status" value="1"/>
</dbReference>
<dbReference type="Gene3D" id="1.10.287.80">
    <property type="entry name" value="ATP synthase, gamma subunit, helix hairpin domain"/>
    <property type="match status" value="1"/>
</dbReference>
<dbReference type="InterPro" id="IPR035968">
    <property type="entry name" value="ATP_synth_F1_ATPase_gsu"/>
</dbReference>
<dbReference type="InterPro" id="IPR000131">
    <property type="entry name" value="ATP_synth_F1_gsu"/>
</dbReference>
<dbReference type="InterPro" id="IPR023632">
    <property type="entry name" value="ATP_synth_F1_gsu_CS"/>
</dbReference>
<dbReference type="NCBIfam" id="TIGR01146">
    <property type="entry name" value="ATPsyn_F1gamma"/>
    <property type="match status" value="1"/>
</dbReference>
<dbReference type="PANTHER" id="PTHR11693">
    <property type="entry name" value="ATP SYNTHASE GAMMA CHAIN"/>
    <property type="match status" value="1"/>
</dbReference>
<dbReference type="PANTHER" id="PTHR11693:SF22">
    <property type="entry name" value="ATP SYNTHASE SUBUNIT GAMMA, MITOCHONDRIAL"/>
    <property type="match status" value="1"/>
</dbReference>
<dbReference type="Pfam" id="PF00231">
    <property type="entry name" value="ATP-synt"/>
    <property type="match status" value="1"/>
</dbReference>
<dbReference type="PIRSF" id="PIRSF039089">
    <property type="entry name" value="ATP_synthase_gamma"/>
    <property type="match status" value="1"/>
</dbReference>
<dbReference type="PRINTS" id="PR00126">
    <property type="entry name" value="ATPASEGAMMA"/>
</dbReference>
<dbReference type="SUPFAM" id="SSF52943">
    <property type="entry name" value="ATP synthase (F1-ATPase), gamma subunit"/>
    <property type="match status" value="1"/>
</dbReference>
<dbReference type="PROSITE" id="PS00153">
    <property type="entry name" value="ATPASE_GAMMA"/>
    <property type="match status" value="1"/>
</dbReference>
<feature type="transit peptide" description="Mitochondrion" evidence="1">
    <location>
        <begin position="1"/>
        <end status="unknown"/>
    </location>
</feature>
<feature type="chain" id="PRO_0000002689" description="ATP synthase subunit gamma, mitochondrial">
    <location>
        <begin status="unknown"/>
        <end position="289"/>
    </location>
</feature>
<feature type="mutagenesis site" description="In MGI5-1; converts K.lactis into a petite-positive form." evidence="2">
    <original>T</original>
    <variation>A</variation>
    <location>
        <position position="275"/>
    </location>
</feature>